<sequence length="535" mass="61762">MGFALVLIFLFGFYLFLMKSSSIFPQRPFTFLYDLWVLLLVLRFLFSLIQILILCLFNFRFVEMTSNNKKKKTELCDLPKCLAPHILSWLPTKTAVTVSLLFMKGWWRSEMKNLSSLKFSFSDDQEEEHFVRFVDQVLRQRGNRKLDSFSLTLNDEIDGGFVTHLVDYPLDNGVEKLKLSIYDIKGNFQLSSRVFSQATLVTLKLATNRSLIWINGDDVAAAHLPCLKTLWLDDVLVADVKVFVRLLSRCPILEELVMIDMKWHNWEACFVVSASLRRLKIVWTDYVEMDEYDRCPQSVLFDTPNVLYLEYTDHIAGQYPLLKFSSLIEAKIRLEMIDEKEEEDEGQEVIVGDNATAFITGITSVRKLYLYANTIQVLHHYFDPPIPEFVYLTHLTIQSDKELGWDAIPELLSKCPHLETLVLEGLFHLATDVCGDVCPCRRNMEQAISYLVKSPVTHLEIYEGVVGKKRGEVTEDAARFGEQVRWFLMRMLHLQQVKIYGQTEDSVTALYDIATELRRLEGKASPNVQISVLQA</sequence>
<keyword id="KW-0025">Alternative splicing</keyword>
<keyword id="KW-0472">Membrane</keyword>
<keyword id="KW-1185">Reference proteome</keyword>
<keyword id="KW-0812">Transmembrane</keyword>
<keyword id="KW-1133">Transmembrane helix</keyword>
<keyword id="KW-0833">Ubl conjugation pathway</keyword>
<protein>
    <recommendedName>
        <fullName>F-box protein At1g56610</fullName>
    </recommendedName>
</protein>
<reference key="1">
    <citation type="journal article" date="2000" name="Nature">
        <title>Sequence and analysis of chromosome 1 of the plant Arabidopsis thaliana.</title>
        <authorList>
            <person name="Theologis A."/>
            <person name="Ecker J.R."/>
            <person name="Palm C.J."/>
            <person name="Federspiel N.A."/>
            <person name="Kaul S."/>
            <person name="White O."/>
            <person name="Alonso J."/>
            <person name="Altafi H."/>
            <person name="Araujo R."/>
            <person name="Bowman C.L."/>
            <person name="Brooks S.Y."/>
            <person name="Buehler E."/>
            <person name="Chan A."/>
            <person name="Chao Q."/>
            <person name="Chen H."/>
            <person name="Cheuk R.F."/>
            <person name="Chin C.W."/>
            <person name="Chung M.K."/>
            <person name="Conn L."/>
            <person name="Conway A.B."/>
            <person name="Conway A.R."/>
            <person name="Creasy T.H."/>
            <person name="Dewar K."/>
            <person name="Dunn P."/>
            <person name="Etgu P."/>
            <person name="Feldblyum T.V."/>
            <person name="Feng J.-D."/>
            <person name="Fong B."/>
            <person name="Fujii C.Y."/>
            <person name="Gill J.E."/>
            <person name="Goldsmith A.D."/>
            <person name="Haas B."/>
            <person name="Hansen N.F."/>
            <person name="Hughes B."/>
            <person name="Huizar L."/>
            <person name="Hunter J.L."/>
            <person name="Jenkins J."/>
            <person name="Johnson-Hopson C."/>
            <person name="Khan S."/>
            <person name="Khaykin E."/>
            <person name="Kim C.J."/>
            <person name="Koo H.L."/>
            <person name="Kremenetskaia I."/>
            <person name="Kurtz D.B."/>
            <person name="Kwan A."/>
            <person name="Lam B."/>
            <person name="Langin-Hooper S."/>
            <person name="Lee A."/>
            <person name="Lee J.M."/>
            <person name="Lenz C.A."/>
            <person name="Li J.H."/>
            <person name="Li Y.-P."/>
            <person name="Lin X."/>
            <person name="Liu S.X."/>
            <person name="Liu Z.A."/>
            <person name="Luros J.S."/>
            <person name="Maiti R."/>
            <person name="Marziali A."/>
            <person name="Militscher J."/>
            <person name="Miranda M."/>
            <person name="Nguyen M."/>
            <person name="Nierman W.C."/>
            <person name="Osborne B.I."/>
            <person name="Pai G."/>
            <person name="Peterson J."/>
            <person name="Pham P.K."/>
            <person name="Rizzo M."/>
            <person name="Rooney T."/>
            <person name="Rowley D."/>
            <person name="Sakano H."/>
            <person name="Salzberg S.L."/>
            <person name="Schwartz J.R."/>
            <person name="Shinn P."/>
            <person name="Southwick A.M."/>
            <person name="Sun H."/>
            <person name="Tallon L.J."/>
            <person name="Tambunga G."/>
            <person name="Toriumi M.J."/>
            <person name="Town C.D."/>
            <person name="Utterback T."/>
            <person name="Van Aken S."/>
            <person name="Vaysberg M."/>
            <person name="Vysotskaia V.S."/>
            <person name="Walker M."/>
            <person name="Wu D."/>
            <person name="Yu G."/>
            <person name="Fraser C.M."/>
            <person name="Venter J.C."/>
            <person name="Davis R.W."/>
        </authorList>
    </citation>
    <scope>NUCLEOTIDE SEQUENCE [LARGE SCALE GENOMIC DNA]</scope>
    <source>
        <strain>cv. Columbia</strain>
    </source>
</reference>
<reference key="2">
    <citation type="journal article" date="2017" name="Plant J.">
        <title>Araport11: a complete reannotation of the Arabidopsis thaliana reference genome.</title>
        <authorList>
            <person name="Cheng C.Y."/>
            <person name="Krishnakumar V."/>
            <person name="Chan A.P."/>
            <person name="Thibaud-Nissen F."/>
            <person name="Schobel S."/>
            <person name="Town C.D."/>
        </authorList>
    </citation>
    <scope>GENOME REANNOTATION</scope>
    <source>
        <strain>cv. Columbia</strain>
    </source>
</reference>
<reference key="3">
    <citation type="journal article" date="2002" name="Science">
        <title>Functional annotation of a full-length Arabidopsis cDNA collection.</title>
        <authorList>
            <person name="Seki M."/>
            <person name="Narusaka M."/>
            <person name="Kamiya A."/>
            <person name="Ishida J."/>
            <person name="Satou M."/>
            <person name="Sakurai T."/>
            <person name="Nakajima M."/>
            <person name="Enju A."/>
            <person name="Akiyama K."/>
            <person name="Oono Y."/>
            <person name="Muramatsu M."/>
            <person name="Hayashizaki Y."/>
            <person name="Kawai J."/>
            <person name="Carninci P."/>
            <person name="Itoh M."/>
            <person name="Ishii Y."/>
            <person name="Arakawa T."/>
            <person name="Shibata K."/>
            <person name="Shinagawa A."/>
            <person name="Shinozaki K."/>
        </authorList>
    </citation>
    <scope>NUCLEOTIDE SEQUENCE [LARGE SCALE MRNA] (ISOFORM 1)</scope>
    <source>
        <strain>cv. Columbia</strain>
    </source>
</reference>
<reference key="4">
    <citation type="journal article" date="2002" name="Proc. Natl. Acad. Sci. U.S.A.">
        <title>The F-box subunit of the SCF E3 complex is encoded by a diverse superfamily of genes in Arabidopsis.</title>
        <authorList>
            <person name="Gagne J.M."/>
            <person name="Downes B.P."/>
            <person name="Shiu S.-H."/>
            <person name="Durski A.M."/>
            <person name="Vierstra R.D."/>
        </authorList>
    </citation>
    <scope>INTERACTION WITH ASK4</scope>
</reference>
<dbReference type="EMBL" id="AC009323">
    <property type="protein sequence ID" value="AAG09102.1"/>
    <property type="molecule type" value="Genomic_DNA"/>
</dbReference>
<dbReference type="EMBL" id="CP002684">
    <property type="protein sequence ID" value="AEE33414.1"/>
    <property type="molecule type" value="Genomic_DNA"/>
</dbReference>
<dbReference type="EMBL" id="CP002684">
    <property type="protein sequence ID" value="AEE33415.1"/>
    <property type="molecule type" value="Genomic_DNA"/>
</dbReference>
<dbReference type="EMBL" id="AK117458">
    <property type="protein sequence ID" value="BAC42123.1"/>
    <property type="molecule type" value="mRNA"/>
</dbReference>
<dbReference type="PIR" id="H96607">
    <property type="entry name" value="H96607"/>
</dbReference>
<dbReference type="RefSeq" id="NP_001031201.1">
    <molecule id="Q8GYP8-2"/>
    <property type="nucleotide sequence ID" value="NM_001036124.2"/>
</dbReference>
<dbReference type="RefSeq" id="NP_176054.2">
    <molecule id="Q8GYP8-1"/>
    <property type="nucleotide sequence ID" value="NM_104538.3"/>
</dbReference>
<dbReference type="BioGRID" id="27341">
    <property type="interactions" value="1"/>
</dbReference>
<dbReference type="FunCoup" id="Q8GYP8">
    <property type="interactions" value="17"/>
</dbReference>
<dbReference type="PaxDb" id="3702-AT1G56610.1"/>
<dbReference type="ProteomicsDB" id="230977">
    <molecule id="Q8GYP8-1"/>
</dbReference>
<dbReference type="EnsemblPlants" id="AT1G56610.1">
    <molecule id="Q8GYP8-1"/>
    <property type="protein sequence ID" value="AT1G56610.1"/>
    <property type="gene ID" value="AT1G56610"/>
</dbReference>
<dbReference type="EnsemblPlants" id="AT1G56610.2">
    <molecule id="Q8GYP8-2"/>
    <property type="protein sequence ID" value="AT1G56610.2"/>
    <property type="gene ID" value="AT1G56610"/>
</dbReference>
<dbReference type="GeneID" id="842116"/>
<dbReference type="Gramene" id="AT1G56610.1">
    <molecule id="Q8GYP8-1"/>
    <property type="protein sequence ID" value="AT1G56610.1"/>
    <property type="gene ID" value="AT1G56610"/>
</dbReference>
<dbReference type="Gramene" id="AT1G56610.2">
    <molecule id="Q8GYP8-2"/>
    <property type="protein sequence ID" value="AT1G56610.2"/>
    <property type="gene ID" value="AT1G56610"/>
</dbReference>
<dbReference type="KEGG" id="ath:AT1G56610"/>
<dbReference type="Araport" id="AT1G56610"/>
<dbReference type="TAIR" id="AT1G56610"/>
<dbReference type="HOGENOM" id="CLU_010721_7_4_1"/>
<dbReference type="InParanoid" id="Q8GYP8"/>
<dbReference type="PhylomeDB" id="Q8GYP8"/>
<dbReference type="UniPathway" id="UPA00143"/>
<dbReference type="PRO" id="PR:Q8GYP8"/>
<dbReference type="Proteomes" id="UP000006548">
    <property type="component" value="Chromosome 1"/>
</dbReference>
<dbReference type="ExpressionAtlas" id="Q8GYP8">
    <property type="expression patterns" value="baseline and differential"/>
</dbReference>
<dbReference type="GO" id="GO:0016020">
    <property type="term" value="C:membrane"/>
    <property type="evidence" value="ECO:0007669"/>
    <property type="project" value="UniProtKB-SubCell"/>
</dbReference>
<dbReference type="GO" id="GO:0016567">
    <property type="term" value="P:protein ubiquitination"/>
    <property type="evidence" value="ECO:0007669"/>
    <property type="project" value="UniProtKB-UniPathway"/>
</dbReference>
<dbReference type="Gene3D" id="3.80.10.10">
    <property type="entry name" value="Ribonuclease Inhibitor"/>
    <property type="match status" value="1"/>
</dbReference>
<dbReference type="InterPro" id="IPR006566">
    <property type="entry name" value="FBD"/>
</dbReference>
<dbReference type="InterPro" id="IPR055294">
    <property type="entry name" value="FBL60-like"/>
</dbReference>
<dbReference type="InterPro" id="IPR032675">
    <property type="entry name" value="LRR_dom_sf"/>
</dbReference>
<dbReference type="InterPro" id="IPR055411">
    <property type="entry name" value="LRR_FXL15/At3g58940/PEG3-like"/>
</dbReference>
<dbReference type="PANTHER" id="PTHR31293">
    <property type="entry name" value="RNI-LIKE SUPERFAMILY PROTEIN"/>
    <property type="match status" value="1"/>
</dbReference>
<dbReference type="PANTHER" id="PTHR31293:SF12">
    <property type="entry name" value="RNI-LIKE SUPERFAMILY PROTEIN"/>
    <property type="match status" value="1"/>
</dbReference>
<dbReference type="Pfam" id="PF24758">
    <property type="entry name" value="LRR_At5g56370"/>
    <property type="match status" value="1"/>
</dbReference>
<dbReference type="SMART" id="SM00579">
    <property type="entry name" value="FBD"/>
    <property type="match status" value="1"/>
</dbReference>
<dbReference type="SUPFAM" id="SSF52047">
    <property type="entry name" value="RNI-like"/>
    <property type="match status" value="1"/>
</dbReference>
<gene>
    <name type="ordered locus">At1g56610</name>
    <name type="ORF">F25P12.94</name>
</gene>
<proteinExistence type="evidence at protein level"/>
<feature type="chain" id="PRO_0000375241" description="F-box protein At1g56610">
    <location>
        <begin position="1"/>
        <end position="535"/>
    </location>
</feature>
<feature type="transmembrane region" description="Helical" evidence="2">
    <location>
        <begin position="3"/>
        <end position="23"/>
    </location>
</feature>
<feature type="transmembrane region" description="Helical" evidence="2">
    <location>
        <begin position="37"/>
        <end position="57"/>
    </location>
</feature>
<feature type="transmembrane region" description="Helical" evidence="2">
    <location>
        <begin position="82"/>
        <end position="102"/>
    </location>
</feature>
<feature type="domain" description="F-box; degenerate">
    <location>
        <begin position="73"/>
        <end position="119"/>
    </location>
</feature>
<feature type="splice variant" id="VSP_037360" description="In isoform 2." evidence="4">
    <location>
        <begin position="1"/>
        <end position="63"/>
    </location>
</feature>
<name>FB310_ARATH</name>
<evidence type="ECO:0000250" key="1"/>
<evidence type="ECO:0000255" key="2"/>
<evidence type="ECO:0000269" key="3">
    <source>
    </source>
</evidence>
<evidence type="ECO:0000305" key="4"/>
<organism>
    <name type="scientific">Arabidopsis thaliana</name>
    <name type="common">Mouse-ear cress</name>
    <dbReference type="NCBI Taxonomy" id="3702"/>
    <lineage>
        <taxon>Eukaryota</taxon>
        <taxon>Viridiplantae</taxon>
        <taxon>Streptophyta</taxon>
        <taxon>Embryophyta</taxon>
        <taxon>Tracheophyta</taxon>
        <taxon>Spermatophyta</taxon>
        <taxon>Magnoliopsida</taxon>
        <taxon>eudicotyledons</taxon>
        <taxon>Gunneridae</taxon>
        <taxon>Pentapetalae</taxon>
        <taxon>rosids</taxon>
        <taxon>malvids</taxon>
        <taxon>Brassicales</taxon>
        <taxon>Brassicaceae</taxon>
        <taxon>Camelineae</taxon>
        <taxon>Arabidopsis</taxon>
    </lineage>
</organism>
<accession>Q8GYP8</accession>
<accession>Q9FXB3</accession>
<comment type="function">
    <text evidence="1">Component of SCF(ASK-cullin-F-box) E3 ubiquitin ligase complexes, which may mediate the ubiquitination and subsequent proteasomal degradation of target proteins.</text>
</comment>
<comment type="pathway">
    <text>Protein modification; protein ubiquitination.</text>
</comment>
<comment type="subunit">
    <text evidence="1 3">Part of a SCF (ASK-cullin-F-box) protein ligase complex (By similarity). Interacts with ASK4.</text>
</comment>
<comment type="subcellular location">
    <subcellularLocation>
        <location evidence="4">Membrane</location>
        <topology evidence="4">Multi-pass membrane protein</topology>
    </subcellularLocation>
</comment>
<comment type="alternative products">
    <event type="alternative splicing"/>
    <isoform>
        <id>Q8GYP8-1</id>
        <name>1</name>
        <sequence type="displayed"/>
    </isoform>
    <isoform>
        <id>Q8GYP8-2</id>
        <name>2</name>
        <sequence type="described" ref="VSP_037360"/>
    </isoform>
</comment>
<comment type="domain">
    <text evidence="1">The F-box is necessary for the interaction with ASK proteins.</text>
</comment>